<feature type="chain" id="PRO_1000195309" description="UPF0758 protein SPJ_1027">
    <location>
        <begin position="1"/>
        <end position="226"/>
    </location>
</feature>
<feature type="domain" description="MPN" evidence="1">
    <location>
        <begin position="103"/>
        <end position="225"/>
    </location>
</feature>
<feature type="short sequence motif" description="JAMM motif" evidence="1">
    <location>
        <begin position="174"/>
        <end position="187"/>
    </location>
</feature>
<feature type="binding site" evidence="1">
    <location>
        <position position="174"/>
    </location>
    <ligand>
        <name>Zn(2+)</name>
        <dbReference type="ChEBI" id="CHEBI:29105"/>
        <note>catalytic</note>
    </ligand>
</feature>
<feature type="binding site" evidence="1">
    <location>
        <position position="176"/>
    </location>
    <ligand>
        <name>Zn(2+)</name>
        <dbReference type="ChEBI" id="CHEBI:29105"/>
        <note>catalytic</note>
    </ligand>
</feature>
<feature type="binding site" evidence="1">
    <location>
        <position position="187"/>
    </location>
    <ligand>
        <name>Zn(2+)</name>
        <dbReference type="ChEBI" id="CHEBI:29105"/>
        <note>catalytic</note>
    </ligand>
</feature>
<proteinExistence type="inferred from homology"/>
<reference key="1">
    <citation type="journal article" date="2010" name="Genome Biol.">
        <title>Structure and dynamics of the pan-genome of Streptococcus pneumoniae and closely related species.</title>
        <authorList>
            <person name="Donati C."/>
            <person name="Hiller N.L."/>
            <person name="Tettelin H."/>
            <person name="Muzzi A."/>
            <person name="Croucher N.J."/>
            <person name="Angiuoli S.V."/>
            <person name="Oggioni M."/>
            <person name="Dunning Hotopp J.C."/>
            <person name="Hu F.Z."/>
            <person name="Riley D.R."/>
            <person name="Covacci A."/>
            <person name="Mitchell T.J."/>
            <person name="Bentley S.D."/>
            <person name="Kilian M."/>
            <person name="Ehrlich G.D."/>
            <person name="Rappuoli R."/>
            <person name="Moxon E.R."/>
            <person name="Masignani V."/>
        </authorList>
    </citation>
    <scope>NUCLEOTIDE SEQUENCE [LARGE SCALE GENOMIC DNA]</scope>
    <source>
        <strain>JJA</strain>
    </source>
</reference>
<name>Y1027_STRZJ</name>
<accession>C1CE75</accession>
<gene>
    <name type="ordered locus">SPJ_1027</name>
</gene>
<dbReference type="EMBL" id="CP000919">
    <property type="protein sequence ID" value="ACO18107.1"/>
    <property type="molecule type" value="Genomic_DNA"/>
</dbReference>
<dbReference type="SMR" id="C1CE75"/>
<dbReference type="KEGG" id="sjj:SPJ_1027"/>
<dbReference type="HOGENOM" id="CLU_073529_0_2_9"/>
<dbReference type="Proteomes" id="UP000002206">
    <property type="component" value="Chromosome"/>
</dbReference>
<dbReference type="GO" id="GO:0046872">
    <property type="term" value="F:metal ion binding"/>
    <property type="evidence" value="ECO:0007669"/>
    <property type="project" value="UniProtKB-KW"/>
</dbReference>
<dbReference type="GO" id="GO:0008237">
    <property type="term" value="F:metallopeptidase activity"/>
    <property type="evidence" value="ECO:0007669"/>
    <property type="project" value="UniProtKB-KW"/>
</dbReference>
<dbReference type="GO" id="GO:0006508">
    <property type="term" value="P:proteolysis"/>
    <property type="evidence" value="ECO:0007669"/>
    <property type="project" value="UniProtKB-KW"/>
</dbReference>
<dbReference type="CDD" id="cd08071">
    <property type="entry name" value="MPN_DUF2466"/>
    <property type="match status" value="1"/>
</dbReference>
<dbReference type="Gene3D" id="3.40.140.10">
    <property type="entry name" value="Cytidine Deaminase, domain 2"/>
    <property type="match status" value="1"/>
</dbReference>
<dbReference type="InterPro" id="IPR037518">
    <property type="entry name" value="MPN"/>
</dbReference>
<dbReference type="InterPro" id="IPR025657">
    <property type="entry name" value="RadC_JAB"/>
</dbReference>
<dbReference type="InterPro" id="IPR010994">
    <property type="entry name" value="RuvA_2-like"/>
</dbReference>
<dbReference type="InterPro" id="IPR001405">
    <property type="entry name" value="UPF0758"/>
</dbReference>
<dbReference type="InterPro" id="IPR020891">
    <property type="entry name" value="UPF0758_CS"/>
</dbReference>
<dbReference type="InterPro" id="IPR046778">
    <property type="entry name" value="UPF0758_N"/>
</dbReference>
<dbReference type="NCBIfam" id="NF000642">
    <property type="entry name" value="PRK00024.1"/>
    <property type="match status" value="1"/>
</dbReference>
<dbReference type="NCBIfam" id="TIGR00608">
    <property type="entry name" value="radc"/>
    <property type="match status" value="1"/>
</dbReference>
<dbReference type="PANTHER" id="PTHR30471">
    <property type="entry name" value="DNA REPAIR PROTEIN RADC"/>
    <property type="match status" value="1"/>
</dbReference>
<dbReference type="PANTHER" id="PTHR30471:SF3">
    <property type="entry name" value="UPF0758 PROTEIN YEES-RELATED"/>
    <property type="match status" value="1"/>
</dbReference>
<dbReference type="Pfam" id="PF04002">
    <property type="entry name" value="RadC"/>
    <property type="match status" value="1"/>
</dbReference>
<dbReference type="Pfam" id="PF20582">
    <property type="entry name" value="UPF0758_N"/>
    <property type="match status" value="1"/>
</dbReference>
<dbReference type="SUPFAM" id="SSF47781">
    <property type="entry name" value="RuvA domain 2-like"/>
    <property type="match status" value="1"/>
</dbReference>
<dbReference type="PROSITE" id="PS50249">
    <property type="entry name" value="MPN"/>
    <property type="match status" value="1"/>
</dbReference>
<dbReference type="PROSITE" id="PS01302">
    <property type="entry name" value="UPF0758"/>
    <property type="match status" value="1"/>
</dbReference>
<organism>
    <name type="scientific">Streptococcus pneumoniae (strain JJA)</name>
    <dbReference type="NCBI Taxonomy" id="488222"/>
    <lineage>
        <taxon>Bacteria</taxon>
        <taxon>Bacillati</taxon>
        <taxon>Bacillota</taxon>
        <taxon>Bacilli</taxon>
        <taxon>Lactobacillales</taxon>
        <taxon>Streptococcaceae</taxon>
        <taxon>Streptococcus</taxon>
    </lineage>
</organism>
<sequence length="226" mass="25564">MYSISFQEDSLLPRERLAKEGVEALSNQELLAILLRTGTRQVSVFEIAQKVLNNLSSLTDLKKMTLQELQSLSGIGRVKAIELQAMIELGHRIHKHETLEMESILSSQKLAKKMQQELGDKKQEHLVALYLNTQNQIIHQQTIFIGSVTRSIAEPREILHYAIKHMATSLILVHNHPSGAVAPSQNDDHVTKLVKEACELMGIVLLDHLIVSHSNYFSYREKTDLI</sequence>
<protein>
    <recommendedName>
        <fullName>UPF0758 protein SPJ_1027</fullName>
    </recommendedName>
</protein>
<keyword id="KW-0378">Hydrolase</keyword>
<keyword id="KW-0479">Metal-binding</keyword>
<keyword id="KW-0482">Metalloprotease</keyword>
<keyword id="KW-0645">Protease</keyword>
<keyword id="KW-0862">Zinc</keyword>
<evidence type="ECO:0000255" key="1">
    <source>
        <dbReference type="PROSITE-ProRule" id="PRU01182"/>
    </source>
</evidence>
<evidence type="ECO:0000305" key="2"/>
<comment type="similarity">
    <text evidence="2">Belongs to the UPF0758 family.</text>
</comment>